<protein>
    <recommendedName>
        <fullName evidence="1">Small ribosomal subunit protein bS21</fullName>
    </recommendedName>
    <alternativeName>
        <fullName evidence="3">30S ribosomal protein S21</fullName>
    </alternativeName>
</protein>
<reference key="1">
    <citation type="journal article" date="2006" name="Proc. Natl. Acad. Sci. U.S.A.">
        <title>Comparative genomics of the lactic acid bacteria.</title>
        <authorList>
            <person name="Makarova K.S."/>
            <person name="Slesarev A."/>
            <person name="Wolf Y.I."/>
            <person name="Sorokin A."/>
            <person name="Mirkin B."/>
            <person name="Koonin E.V."/>
            <person name="Pavlov A."/>
            <person name="Pavlova N."/>
            <person name="Karamychev V."/>
            <person name="Polouchine N."/>
            <person name="Shakhova V."/>
            <person name="Grigoriev I."/>
            <person name="Lou Y."/>
            <person name="Rohksar D."/>
            <person name="Lucas S."/>
            <person name="Huang K."/>
            <person name="Goodstein D.M."/>
            <person name="Hawkins T."/>
            <person name="Plengvidhya V."/>
            <person name="Welker D."/>
            <person name="Hughes J."/>
            <person name="Goh Y."/>
            <person name="Benson A."/>
            <person name="Baldwin K."/>
            <person name="Lee J.-H."/>
            <person name="Diaz-Muniz I."/>
            <person name="Dosti B."/>
            <person name="Smeianov V."/>
            <person name="Wechter W."/>
            <person name="Barabote R."/>
            <person name="Lorca G."/>
            <person name="Altermann E."/>
            <person name="Barrangou R."/>
            <person name="Ganesan B."/>
            <person name="Xie Y."/>
            <person name="Rawsthorne H."/>
            <person name="Tamir D."/>
            <person name="Parker C."/>
            <person name="Breidt F."/>
            <person name="Broadbent J.R."/>
            <person name="Hutkins R."/>
            <person name="O'Sullivan D."/>
            <person name="Steele J."/>
            <person name="Unlu G."/>
            <person name="Saier M.H. Jr."/>
            <person name="Klaenhammer T."/>
            <person name="Richardson P."/>
            <person name="Kozyavkin S."/>
            <person name="Weimer B.C."/>
            <person name="Mills D.A."/>
        </authorList>
    </citation>
    <scope>NUCLEOTIDE SEQUENCE [LARGE SCALE GENOMIC DNA]</scope>
    <source>
        <strain>ATCC 367 / BCRC 12310 / CIP 105137 / JCM 1170 / LMG 11437 / NCIMB 947 / NCTC 947</strain>
    </source>
</reference>
<sequence>MAKTVVRKNESFDDALRRFKRTVSRSGTLQEYRKREFYEKPSVKKKLKSEAARKRKAKKKRF</sequence>
<name>RS21_LEVBA</name>
<feature type="chain" id="PRO_1000005125" description="Small ribosomal subunit protein bS21">
    <location>
        <begin position="1"/>
        <end position="62"/>
    </location>
</feature>
<feature type="region of interest" description="Disordered" evidence="2">
    <location>
        <begin position="43"/>
        <end position="62"/>
    </location>
</feature>
<feature type="compositionally biased region" description="Basic and acidic residues" evidence="2">
    <location>
        <begin position="43"/>
        <end position="52"/>
    </location>
</feature>
<feature type="compositionally biased region" description="Basic residues" evidence="2">
    <location>
        <begin position="53"/>
        <end position="62"/>
    </location>
</feature>
<accession>Q03SD5</accession>
<proteinExistence type="inferred from homology"/>
<keyword id="KW-1185">Reference proteome</keyword>
<keyword id="KW-0687">Ribonucleoprotein</keyword>
<keyword id="KW-0689">Ribosomal protein</keyword>
<organism>
    <name type="scientific">Levilactobacillus brevis (strain ATCC 367 / BCRC 12310 / CIP 105137 / JCM 1170 / LMG 11437 / NCIMB 947 / NCTC 947)</name>
    <name type="common">Lactobacillus brevis</name>
    <dbReference type="NCBI Taxonomy" id="387344"/>
    <lineage>
        <taxon>Bacteria</taxon>
        <taxon>Bacillati</taxon>
        <taxon>Bacillota</taxon>
        <taxon>Bacilli</taxon>
        <taxon>Lactobacillales</taxon>
        <taxon>Lactobacillaceae</taxon>
        <taxon>Levilactobacillus</taxon>
    </lineage>
</organism>
<gene>
    <name evidence="1" type="primary">rpsU</name>
    <name type="ordered locus">LVIS_0744</name>
</gene>
<comment type="similarity">
    <text evidence="1">Belongs to the bacterial ribosomal protein bS21 family.</text>
</comment>
<evidence type="ECO:0000255" key="1">
    <source>
        <dbReference type="HAMAP-Rule" id="MF_00358"/>
    </source>
</evidence>
<evidence type="ECO:0000256" key="2">
    <source>
        <dbReference type="SAM" id="MobiDB-lite"/>
    </source>
</evidence>
<evidence type="ECO:0000305" key="3"/>
<dbReference type="EMBL" id="CP000416">
    <property type="protein sequence ID" value="ABJ63887.1"/>
    <property type="molecule type" value="Genomic_DNA"/>
</dbReference>
<dbReference type="RefSeq" id="WP_011667518.1">
    <property type="nucleotide sequence ID" value="NC_008497.1"/>
</dbReference>
<dbReference type="SMR" id="Q03SD5"/>
<dbReference type="STRING" id="387344.LVIS_0744"/>
<dbReference type="GeneID" id="97414705"/>
<dbReference type="KEGG" id="lbr:LVIS_0744"/>
<dbReference type="eggNOG" id="COG0828">
    <property type="taxonomic scope" value="Bacteria"/>
</dbReference>
<dbReference type="HOGENOM" id="CLU_159258_3_2_9"/>
<dbReference type="Proteomes" id="UP000001652">
    <property type="component" value="Chromosome"/>
</dbReference>
<dbReference type="GO" id="GO:1990904">
    <property type="term" value="C:ribonucleoprotein complex"/>
    <property type="evidence" value="ECO:0007669"/>
    <property type="project" value="UniProtKB-KW"/>
</dbReference>
<dbReference type="GO" id="GO:0005840">
    <property type="term" value="C:ribosome"/>
    <property type="evidence" value="ECO:0007669"/>
    <property type="project" value="UniProtKB-KW"/>
</dbReference>
<dbReference type="GO" id="GO:0003735">
    <property type="term" value="F:structural constituent of ribosome"/>
    <property type="evidence" value="ECO:0007669"/>
    <property type="project" value="InterPro"/>
</dbReference>
<dbReference type="GO" id="GO:0006412">
    <property type="term" value="P:translation"/>
    <property type="evidence" value="ECO:0007669"/>
    <property type="project" value="UniProtKB-UniRule"/>
</dbReference>
<dbReference type="Gene3D" id="1.20.5.1150">
    <property type="entry name" value="Ribosomal protein S8"/>
    <property type="match status" value="1"/>
</dbReference>
<dbReference type="HAMAP" id="MF_00358">
    <property type="entry name" value="Ribosomal_bS21"/>
    <property type="match status" value="1"/>
</dbReference>
<dbReference type="InterPro" id="IPR001911">
    <property type="entry name" value="Ribosomal_bS21"/>
</dbReference>
<dbReference type="InterPro" id="IPR018278">
    <property type="entry name" value="Ribosomal_bS21_CS"/>
</dbReference>
<dbReference type="InterPro" id="IPR038380">
    <property type="entry name" value="Ribosomal_bS21_sf"/>
</dbReference>
<dbReference type="NCBIfam" id="TIGR00030">
    <property type="entry name" value="S21p"/>
    <property type="match status" value="1"/>
</dbReference>
<dbReference type="PANTHER" id="PTHR21109">
    <property type="entry name" value="MITOCHONDRIAL 28S RIBOSOMAL PROTEIN S21"/>
    <property type="match status" value="1"/>
</dbReference>
<dbReference type="PANTHER" id="PTHR21109:SF22">
    <property type="entry name" value="SMALL RIBOSOMAL SUBUNIT PROTEIN BS21"/>
    <property type="match status" value="1"/>
</dbReference>
<dbReference type="Pfam" id="PF01165">
    <property type="entry name" value="Ribosomal_S21"/>
    <property type="match status" value="1"/>
</dbReference>
<dbReference type="PRINTS" id="PR00976">
    <property type="entry name" value="RIBOSOMALS21"/>
</dbReference>
<dbReference type="PROSITE" id="PS01181">
    <property type="entry name" value="RIBOSOMAL_S21"/>
    <property type="match status" value="1"/>
</dbReference>